<feature type="signal peptide" evidence="1">
    <location>
        <begin position="1"/>
        <end position="19"/>
    </location>
</feature>
<feature type="chain" id="PRO_0000015565" description="Interleukin-5">
    <location>
        <begin position="20"/>
        <end position="132"/>
    </location>
</feature>
<feature type="glycosylation site" description="N-linked (GlcNAc...) asparagine" evidence="4">
    <location>
        <position position="45"/>
    </location>
</feature>
<feature type="glycosylation site" description="N-linked (GlcNAc...) asparagine" evidence="4">
    <location>
        <position position="74"/>
    </location>
</feature>
<feature type="glycosylation site" description="N-linked (GlcNAc...) asparagine" evidence="4">
    <location>
        <position position="88"/>
    </location>
</feature>
<feature type="disulfide bond" description="Interchain (with C-103)" evidence="1">
    <location>
        <position position="61"/>
    </location>
</feature>
<feature type="disulfide bond" description="Interchain (with C-61)" evidence="1">
    <location>
        <position position="103"/>
    </location>
</feature>
<comment type="function">
    <text evidence="2 3 5">Homodimeric cytokine expressed predominantly by T-lymphocytes and NK cells that plays an important role in the survival, differentiation, and chemotaxis of eosinophils (PubMed:10446387). Acts also on activated and resting B-cells to induce immunoglobulin production, growth, and differentiation (By similarity). Mechanistically, exerts its biological effects through a receptor composed of IL5RA subunit and the cytokine receptor common subunit beta/CSF2RB. Binding to the receptor leads to activation of various kinases including LYN, SYK and JAK2 and thereby propagates signals through the RAS-MAPK and JAK-STAT5 pathways respectively (By similarity).</text>
</comment>
<comment type="subunit">
    <text evidence="3">Homodimer; disulfide-linked. Interacts with IL5RA. Interacts with CSF2RB.</text>
</comment>
<comment type="subcellular location">
    <subcellularLocation>
        <location>Secreted</location>
    </subcellularLocation>
</comment>
<comment type="similarity">
    <text evidence="6">Belongs to the IL-5 family.</text>
</comment>
<proteinExistence type="inferred from homology"/>
<accession>Q08125</accession>
<reference key="1">
    <citation type="journal article" date="1991" name="Cytokine">
        <title>The rat interleukin-5 gene: characterization and expression by retroviral gene transfer and polymerase chain reaction.</title>
        <authorList>
            <person name="Ueberla K.T."/>
            <person name="Li W."/>
            <person name="Guin Z."/>
            <person name="Richter G."/>
            <person name="Raabe T."/>
            <person name="Diamantstein T."/>
            <person name="Blanckenstein T."/>
        </authorList>
    </citation>
    <scope>NUCLEOTIDE SEQUENCE [GENOMIC DNA]</scope>
    <source>
        <strain>Lewis</strain>
    </source>
</reference>
<reference key="2">
    <citation type="journal article" date="1999" name="Biochim. Biophys. Acta">
        <title>Preparation of recombinant rat interleukin-5 by baculovirus expression system and analysis of its biological activities.</title>
        <authorList>
            <person name="Ishihara K."/>
            <person name="Satoh I."/>
            <person name="Nittoh T."/>
            <person name="Kanaya T."/>
            <person name="Okazaki H."/>
            <person name="Suzuki T."/>
            <person name="Koyama T."/>
            <person name="Sakamoto T."/>
            <person name="Ide T."/>
            <person name="Ohuchi K."/>
        </authorList>
    </citation>
    <scope>FUNCTION</scope>
</reference>
<keyword id="KW-0202">Cytokine</keyword>
<keyword id="KW-1015">Disulfide bond</keyword>
<keyword id="KW-0325">Glycoprotein</keyword>
<keyword id="KW-0339">Growth factor</keyword>
<keyword id="KW-1185">Reference proteome</keyword>
<keyword id="KW-0964">Secreted</keyword>
<keyword id="KW-0732">Signal</keyword>
<organism>
    <name type="scientific">Rattus norvegicus</name>
    <name type="common">Rat</name>
    <dbReference type="NCBI Taxonomy" id="10116"/>
    <lineage>
        <taxon>Eukaryota</taxon>
        <taxon>Metazoa</taxon>
        <taxon>Chordata</taxon>
        <taxon>Craniata</taxon>
        <taxon>Vertebrata</taxon>
        <taxon>Euteleostomi</taxon>
        <taxon>Mammalia</taxon>
        <taxon>Eutheria</taxon>
        <taxon>Euarchontoglires</taxon>
        <taxon>Glires</taxon>
        <taxon>Rodentia</taxon>
        <taxon>Myomorpha</taxon>
        <taxon>Muroidea</taxon>
        <taxon>Muridae</taxon>
        <taxon>Murinae</taxon>
        <taxon>Rattus</taxon>
    </lineage>
</organism>
<dbReference type="EMBL" id="X54419">
    <property type="protein sequence ID" value="CAA38283.1"/>
    <property type="molecule type" value="Genomic_DNA"/>
</dbReference>
<dbReference type="PIR" id="A48418">
    <property type="entry name" value="A48418"/>
</dbReference>
<dbReference type="SMR" id="Q08125"/>
<dbReference type="FunCoup" id="Q08125">
    <property type="interactions" value="7"/>
</dbReference>
<dbReference type="STRING" id="10116.ENSRNOP00000010729"/>
<dbReference type="GlyCosmos" id="Q08125">
    <property type="glycosylation" value="3 sites, No reported glycans"/>
</dbReference>
<dbReference type="GlyGen" id="Q08125">
    <property type="glycosylation" value="3 sites"/>
</dbReference>
<dbReference type="PhosphoSitePlus" id="Q08125"/>
<dbReference type="PaxDb" id="10116-ENSRNOP00000010729"/>
<dbReference type="Ensembl" id="ENSRNOT00000010729.5">
    <property type="protein sequence ID" value="ENSRNOP00000010729.4"/>
    <property type="gene ID" value="ENSRNOG00000008111.5"/>
</dbReference>
<dbReference type="UCSC" id="RGD:2900">
    <property type="organism name" value="rat"/>
</dbReference>
<dbReference type="AGR" id="RGD:2900"/>
<dbReference type="RGD" id="2900">
    <property type="gene designation" value="Il5"/>
</dbReference>
<dbReference type="eggNOG" id="ENOG502RWD8">
    <property type="taxonomic scope" value="Eukaryota"/>
</dbReference>
<dbReference type="GeneTree" id="ENSGT00390000016991"/>
<dbReference type="HOGENOM" id="CLU_156269_0_0_1"/>
<dbReference type="InParanoid" id="Q08125"/>
<dbReference type="OMA" id="VPTHKNH"/>
<dbReference type="OrthoDB" id="9446172at2759"/>
<dbReference type="PhylomeDB" id="Q08125"/>
<dbReference type="TreeFam" id="TF338422"/>
<dbReference type="Reactome" id="R-RNO-512988">
    <property type="pathway name" value="Interleukin-3, Interleukin-5 and GM-CSF signaling"/>
</dbReference>
<dbReference type="Reactome" id="R-RNO-5673001">
    <property type="pathway name" value="RAF/MAP kinase cascade"/>
</dbReference>
<dbReference type="Reactome" id="R-RNO-912526">
    <property type="pathway name" value="Interleukin receptor SHC signaling"/>
</dbReference>
<dbReference type="PRO" id="PR:Q08125"/>
<dbReference type="Proteomes" id="UP000002494">
    <property type="component" value="Chromosome 10"/>
</dbReference>
<dbReference type="Bgee" id="ENSRNOG00000008111">
    <property type="expression patterns" value="Expressed in quadriceps femoris"/>
</dbReference>
<dbReference type="GO" id="GO:0005576">
    <property type="term" value="C:extracellular region"/>
    <property type="evidence" value="ECO:0000266"/>
    <property type="project" value="RGD"/>
</dbReference>
<dbReference type="GO" id="GO:0005615">
    <property type="term" value="C:extracellular space"/>
    <property type="evidence" value="ECO:0000314"/>
    <property type="project" value="RGD"/>
</dbReference>
<dbReference type="GO" id="GO:0005125">
    <property type="term" value="F:cytokine activity"/>
    <property type="evidence" value="ECO:0000314"/>
    <property type="project" value="RGD"/>
</dbReference>
<dbReference type="GO" id="GO:0008083">
    <property type="term" value="F:growth factor activity"/>
    <property type="evidence" value="ECO:0007669"/>
    <property type="project" value="UniProtKB-KW"/>
</dbReference>
<dbReference type="GO" id="GO:0005137">
    <property type="term" value="F:interleukin-5 receptor binding"/>
    <property type="evidence" value="ECO:0000314"/>
    <property type="project" value="RGD"/>
</dbReference>
<dbReference type="GO" id="GO:0019221">
    <property type="term" value="P:cytokine-mediated signaling pathway"/>
    <property type="evidence" value="ECO:0000314"/>
    <property type="project" value="RGD"/>
</dbReference>
<dbReference type="GO" id="GO:0006955">
    <property type="term" value="P:immune response"/>
    <property type="evidence" value="ECO:0007669"/>
    <property type="project" value="InterPro"/>
</dbReference>
<dbReference type="GO" id="GO:0038043">
    <property type="term" value="P:interleukin-5-mediated signaling pathway"/>
    <property type="evidence" value="ECO:0000266"/>
    <property type="project" value="RGD"/>
</dbReference>
<dbReference type="GO" id="GO:0030890">
    <property type="term" value="P:positive regulation of B cell proliferation"/>
    <property type="evidence" value="ECO:0000314"/>
    <property type="project" value="RGD"/>
</dbReference>
<dbReference type="GO" id="GO:0008284">
    <property type="term" value="P:positive regulation of cell population proliferation"/>
    <property type="evidence" value="ECO:0000314"/>
    <property type="project" value="RGD"/>
</dbReference>
<dbReference type="GO" id="GO:0045893">
    <property type="term" value="P:positive regulation of DNA-templated transcription"/>
    <property type="evidence" value="ECO:0000266"/>
    <property type="project" value="RGD"/>
</dbReference>
<dbReference type="GO" id="GO:0045645">
    <property type="term" value="P:positive regulation of eosinophil differentiation"/>
    <property type="evidence" value="ECO:0000314"/>
    <property type="project" value="RGD"/>
</dbReference>
<dbReference type="GO" id="GO:0002639">
    <property type="term" value="P:positive regulation of immunoglobulin production"/>
    <property type="evidence" value="ECO:0000266"/>
    <property type="project" value="RGD"/>
</dbReference>
<dbReference type="GO" id="GO:0071803">
    <property type="term" value="P:positive regulation of podosome assembly"/>
    <property type="evidence" value="ECO:0000266"/>
    <property type="project" value="RGD"/>
</dbReference>
<dbReference type="GO" id="GO:0046427">
    <property type="term" value="P:positive regulation of receptor signaling pathway via JAK-STAT"/>
    <property type="evidence" value="ECO:0000315"/>
    <property type="project" value="RGD"/>
</dbReference>
<dbReference type="FunFam" id="1.20.1250.10:FF:000034">
    <property type="entry name" value="Interleukin-5"/>
    <property type="match status" value="1"/>
</dbReference>
<dbReference type="Gene3D" id="1.20.1250.10">
    <property type="match status" value="1"/>
</dbReference>
<dbReference type="InterPro" id="IPR009079">
    <property type="entry name" value="4_helix_cytokine-like_core"/>
</dbReference>
<dbReference type="InterPro" id="IPR000186">
    <property type="entry name" value="IL-5"/>
</dbReference>
<dbReference type="PANTHER" id="PTHR48491">
    <property type="entry name" value="INTERLEUKIN-5"/>
    <property type="match status" value="1"/>
</dbReference>
<dbReference type="PANTHER" id="PTHR48491:SF1">
    <property type="entry name" value="INTERLEUKIN-5"/>
    <property type="match status" value="1"/>
</dbReference>
<dbReference type="Pfam" id="PF02025">
    <property type="entry name" value="IL5"/>
    <property type="match status" value="1"/>
</dbReference>
<dbReference type="PRINTS" id="PR00432">
    <property type="entry name" value="INTERLEUKIN5"/>
</dbReference>
<dbReference type="SUPFAM" id="SSF47266">
    <property type="entry name" value="4-helical cytokines"/>
    <property type="match status" value="1"/>
</dbReference>
<name>IL5_RAT</name>
<gene>
    <name type="primary">Il5</name>
    <name type="synonym">Il-5</name>
</gene>
<sequence length="132" mass="15207">MRMLLCLNVLTLSCVWAIAMEIPMSTVVKETLIQLSTHRALLTSNETMRLPVPTHKNHQLCIGEIFQGLDILKNQTVRGGTVEILFQNLSLIKKYIDGQKEKCGEERRKTRHFLDYLQEFLGVMSTEWAMEV</sequence>
<protein>
    <recommendedName>
        <fullName>Interleukin-5</fullName>
        <shortName>IL-5</shortName>
    </recommendedName>
    <alternativeName>
        <fullName>B-cell growth factor II</fullName>
        <shortName>BCGF-II</shortName>
    </alternativeName>
    <alternativeName>
        <fullName>Cytotoxic T-lymphocyte inducer</fullName>
    </alternativeName>
    <alternativeName>
        <fullName>Eosinophil differentiation factor</fullName>
    </alternativeName>
    <alternativeName>
        <fullName>T-cell replacing factor</fullName>
        <shortName>TRF</shortName>
    </alternativeName>
</protein>
<evidence type="ECO:0000250" key="1"/>
<evidence type="ECO:0000250" key="2">
    <source>
        <dbReference type="UniProtKB" id="P04401"/>
    </source>
</evidence>
<evidence type="ECO:0000250" key="3">
    <source>
        <dbReference type="UniProtKB" id="P05113"/>
    </source>
</evidence>
<evidence type="ECO:0000255" key="4"/>
<evidence type="ECO:0000269" key="5">
    <source>
    </source>
</evidence>
<evidence type="ECO:0000305" key="6"/>